<comment type="function">
    <text evidence="2">May function as a substrate receptor for CUL4-DDB1 E3 ubiquitin-protein ligase complex.</text>
</comment>
<comment type="pathway">
    <text>Protein modification; protein ubiquitination.</text>
</comment>
<comment type="interaction">
    <interactant intactId="EBI-311222">
        <id>Q8N5D0</id>
    </interactant>
    <interactant intactId="EBI-10979484">
        <id>Q96IK1</id>
        <label>BOD1</label>
    </interactant>
    <organismsDiffer>false</organismsDiffer>
    <experiments>3</experiments>
</comment>
<comment type="interaction">
    <interactant intactId="EBI-311222">
        <id>Q8N5D0</id>
    </interactant>
    <interactant intactId="EBI-3937367">
        <id>Q9NUI1</id>
        <label>DECR2</label>
    </interactant>
    <organismsDiffer>false</organismsDiffer>
    <experiments>2</experiments>
</comment>
<comment type="interaction">
    <interactant intactId="EBI-15821254">
        <id>Q8N5D0-4</id>
    </interactant>
    <interactant intactId="EBI-350322">
        <id>Q16531</id>
        <label>DDB1</label>
    </interactant>
    <organismsDiffer>false</organismsDiffer>
    <experiments>3</experiments>
</comment>
<comment type="interaction">
    <interactant intactId="EBI-15821254">
        <id>Q8N5D0-4</id>
    </interactant>
    <interactant intactId="EBI-12157263">
        <id>P40337-2</id>
        <label>VHL</label>
    </interactant>
    <organismsDiffer>false</organismsDiffer>
    <experiments>3</experiments>
</comment>
<comment type="alternative products">
    <event type="alternative splicing"/>
    <isoform>
        <id>Q8N5D0-1</id>
        <name>1</name>
        <sequence type="displayed"/>
    </isoform>
    <isoform>
        <id>Q8N5D0-2</id>
        <name>2</name>
        <sequence type="described" ref="VSP_009292"/>
    </isoform>
    <isoform>
        <id>Q8N5D0-3</id>
        <name>3</name>
        <sequence type="described" ref="VSP_009291"/>
    </isoform>
    <isoform>
        <id>Q8N5D0-4</id>
        <name>4</name>
        <sequence type="described" ref="VSP_009290"/>
    </isoform>
    <isoform>
        <id>Q8N5D0-5</id>
        <name>5</name>
        <sequence type="described" ref="VSP_009290 VSP_009291"/>
    </isoform>
    <isoform>
        <id>Q8N5D0-6</id>
        <name>6</name>
        <sequence type="described" ref="VSP_009290 VSP_009292"/>
    </isoform>
</comment>
<sequence length="677" mass="75920">MAKVNITRDLIRRQIKERGALSFERRYHVTDPFIRRLGLEAELQGHSGCVNCLEWNEKGDLLASGSDDQHTIVWDPLHHKKLLSMHTGHTANIFSVKFLPHAGDRILITGAADSKVHVHDLTVKETIHMFGDHTNRVKRIATAPMWPNTFWSAAEDGLIRQYDLRENSKHSEVLIDLTEYCGQLVEAKCLTVNPQDNNCLAVGASGPFVRLYDIRMIHNHRKSMKQSPSAGVHTFCDRQKPLPDGAAQYYVAGHLPVKLPDYNNRLRVLVATYVTFSPNGTELLVNMGGEQVYLFDLTYKQRPYTFLLPRKCHSSGEVQNGKMSTNGVSNGVSNGLHLHSNGFRLPESRGHVSPQVELPPYLERVKQQANEAFACQQWTQAIQLYSKAVQRAPHNAMLYGNRAAAYMKRKWDGDHYDALRDCLKAISLNPCHLKAHFRLARCLFELKYVAEALECLDDFKGKFPEQAHSSACDALGRDITAALFSKNDGEEKKGPGGGAPVRLRSTSRKDSISEDEMVLRERSYDYQFRYCGHCNTTTDIKEANFFGSNAQYIVSGSDDGSFFIWEKETTNLVRVLQGDESIVNCLQPHPSYCFLATSGIDPVVRLWNPRPESEDLTGRVVEDMEGASQANQRRMNADPLEVMLLNMGYRITGLSSGGAGASDDEDSSEGQVQCRPS</sequence>
<organism>
    <name type="scientific">Homo sapiens</name>
    <name type="common">Human</name>
    <dbReference type="NCBI Taxonomy" id="9606"/>
    <lineage>
        <taxon>Eukaryota</taxon>
        <taxon>Metazoa</taxon>
        <taxon>Chordata</taxon>
        <taxon>Craniata</taxon>
        <taxon>Vertebrata</taxon>
        <taxon>Euteleostomi</taxon>
        <taxon>Mammalia</taxon>
        <taxon>Eutheria</taxon>
        <taxon>Euarchontoglires</taxon>
        <taxon>Primates</taxon>
        <taxon>Haplorrhini</taxon>
        <taxon>Catarrhini</taxon>
        <taxon>Hominidae</taxon>
        <taxon>Homo</taxon>
    </lineage>
</organism>
<feature type="chain" id="PRO_0000051434" description="WD and tetratricopeptide repeats protein 1">
    <location>
        <begin position="1"/>
        <end position="677"/>
    </location>
</feature>
<feature type="repeat" description="WD 1">
    <location>
        <begin position="45"/>
        <end position="84"/>
    </location>
</feature>
<feature type="repeat" description="WD 2">
    <location>
        <begin position="88"/>
        <end position="129"/>
    </location>
</feature>
<feature type="repeat" description="WD 3">
    <location>
        <begin position="132"/>
        <end position="172"/>
    </location>
</feature>
<feature type="repeat" description="WD 4">
    <location>
        <begin position="182"/>
        <end position="222"/>
    </location>
</feature>
<feature type="repeat" description="WD 5">
    <location>
        <begin position="265"/>
        <end position="305"/>
    </location>
</feature>
<feature type="repeat" description="TPR 1">
    <location>
        <begin position="362"/>
        <end position="395"/>
    </location>
</feature>
<feature type="repeat" description="TPR 2">
    <location>
        <begin position="397"/>
        <end position="432"/>
    </location>
</feature>
<feature type="repeat" description="WD 6">
    <location>
        <begin position="535"/>
        <end position="575"/>
    </location>
</feature>
<feature type="repeat" description="WD 7">
    <location>
        <begin position="578"/>
        <end position="617"/>
    </location>
</feature>
<feature type="region of interest" description="Disordered" evidence="1">
    <location>
        <begin position="487"/>
        <end position="509"/>
    </location>
</feature>
<feature type="region of interest" description="Disordered" evidence="1">
    <location>
        <begin position="655"/>
        <end position="677"/>
    </location>
</feature>
<feature type="modified residue" description="Phosphoserine" evidence="9">
    <location>
        <position position="353"/>
    </location>
</feature>
<feature type="modified residue" description="Phosphoserine" evidence="7 8 9">
    <location>
        <position position="511"/>
    </location>
</feature>
<feature type="splice variant" id="VSP_009290" description="In isoform 4, isoform 5 and isoform 6." evidence="5">
    <location>
        <position position="317"/>
    </location>
</feature>
<feature type="splice variant" id="VSP_009292" description="In isoform 2 and isoform 6." evidence="4">
    <original>SNAQYIVSGSDDGSFFIWEKETTNLVRVLQGDESIVNCLQPHPSYCFLATSGIDPVVRLWNPRPESEDLTGRVVEDMEGASQANQRRMNADPLEVMLLNMGYRITGLSSGGAGASDDEDSSEGQVQCRPS</original>
    <variation>RRPPTWSVCSKGMSPLSTACSHTPATASWPPVASILLCGSGTPDQRVKTSQAESWKIWRVLHRPTSGA</variation>
    <location>
        <begin position="548"/>
        <end position="677"/>
    </location>
</feature>
<feature type="splice variant" id="VSP_009291" description="In isoform 3 and isoform 5." evidence="3">
    <original>SNAQYIVSGSDDGSFFIWEKETTNLVRVLQGDESIVNCLQPHPSYCFLATSGIDPVVRLWNPRPESEDLTGRVVEDMEGASQANQRRMNADPLEVMLLNMGYRITGLSSGGAGASDDEDSSEGQVQCRPS</original>
    <variation>RSEALKRRVQPSWQREVEWGVLGHNGFREESQIPALPLYPWANGFTFVSL</variation>
    <location>
        <begin position="548"/>
        <end position="677"/>
    </location>
</feature>
<feature type="sequence conflict" description="In Ref. 1; BAA91868." evidence="6" ref="1">
    <original>L</original>
    <variation>P</variation>
    <location>
        <position position="456"/>
    </location>
</feature>
<feature type="helix" evidence="10">
    <location>
        <begin position="6"/>
        <end position="14"/>
    </location>
</feature>
<accession>Q8N5D0</accession>
<accession>D3DPL5</accession>
<accession>Q5SSC5</accession>
<accession>Q9NV87</accession>
<accession>Q9UPW4</accession>
<evidence type="ECO:0000256" key="1">
    <source>
        <dbReference type="SAM" id="MobiDB-lite"/>
    </source>
</evidence>
<evidence type="ECO:0000269" key="2">
    <source>
    </source>
</evidence>
<evidence type="ECO:0000303" key="3">
    <source>
    </source>
</evidence>
<evidence type="ECO:0000303" key="4">
    <source>
    </source>
</evidence>
<evidence type="ECO:0000303" key="5">
    <source>
    </source>
</evidence>
<evidence type="ECO:0000305" key="6"/>
<evidence type="ECO:0007744" key="7">
    <source>
    </source>
</evidence>
<evidence type="ECO:0007744" key="8">
    <source>
    </source>
</evidence>
<evidence type="ECO:0007744" key="9">
    <source>
    </source>
</evidence>
<evidence type="ECO:0007829" key="10">
    <source>
        <dbReference type="PDB" id="3I7N"/>
    </source>
</evidence>
<name>WDTC1_HUMAN</name>
<reference key="1">
    <citation type="journal article" date="2004" name="Nat. Genet.">
        <title>Complete sequencing and characterization of 21,243 full-length human cDNAs.</title>
        <authorList>
            <person name="Ota T."/>
            <person name="Suzuki Y."/>
            <person name="Nishikawa T."/>
            <person name="Otsuki T."/>
            <person name="Sugiyama T."/>
            <person name="Irie R."/>
            <person name="Wakamatsu A."/>
            <person name="Hayashi K."/>
            <person name="Sato H."/>
            <person name="Nagai K."/>
            <person name="Kimura K."/>
            <person name="Makita H."/>
            <person name="Sekine M."/>
            <person name="Obayashi M."/>
            <person name="Nishi T."/>
            <person name="Shibahara T."/>
            <person name="Tanaka T."/>
            <person name="Ishii S."/>
            <person name="Yamamoto J."/>
            <person name="Saito K."/>
            <person name="Kawai Y."/>
            <person name="Isono Y."/>
            <person name="Nakamura Y."/>
            <person name="Nagahari K."/>
            <person name="Murakami K."/>
            <person name="Yasuda T."/>
            <person name="Iwayanagi T."/>
            <person name="Wagatsuma M."/>
            <person name="Shiratori A."/>
            <person name="Sudo H."/>
            <person name="Hosoiri T."/>
            <person name="Kaku Y."/>
            <person name="Kodaira H."/>
            <person name="Kondo H."/>
            <person name="Sugawara M."/>
            <person name="Takahashi M."/>
            <person name="Kanda K."/>
            <person name="Yokoi T."/>
            <person name="Furuya T."/>
            <person name="Kikkawa E."/>
            <person name="Omura Y."/>
            <person name="Abe K."/>
            <person name="Kamihara K."/>
            <person name="Katsuta N."/>
            <person name="Sato K."/>
            <person name="Tanikawa M."/>
            <person name="Yamazaki M."/>
            <person name="Ninomiya K."/>
            <person name="Ishibashi T."/>
            <person name="Yamashita H."/>
            <person name="Murakawa K."/>
            <person name="Fujimori K."/>
            <person name="Tanai H."/>
            <person name="Kimata M."/>
            <person name="Watanabe M."/>
            <person name="Hiraoka S."/>
            <person name="Chiba Y."/>
            <person name="Ishida S."/>
            <person name="Ono Y."/>
            <person name="Takiguchi S."/>
            <person name="Watanabe S."/>
            <person name="Yosida M."/>
            <person name="Hotuta T."/>
            <person name="Kusano J."/>
            <person name="Kanehori K."/>
            <person name="Takahashi-Fujii A."/>
            <person name="Hara H."/>
            <person name="Tanase T.-O."/>
            <person name="Nomura Y."/>
            <person name="Togiya S."/>
            <person name="Komai F."/>
            <person name="Hara R."/>
            <person name="Takeuchi K."/>
            <person name="Arita M."/>
            <person name="Imose N."/>
            <person name="Musashino K."/>
            <person name="Yuuki H."/>
            <person name="Oshima A."/>
            <person name="Sasaki N."/>
            <person name="Aotsuka S."/>
            <person name="Yoshikawa Y."/>
            <person name="Matsunawa H."/>
            <person name="Ichihara T."/>
            <person name="Shiohata N."/>
            <person name="Sano S."/>
            <person name="Moriya S."/>
            <person name="Momiyama H."/>
            <person name="Satoh N."/>
            <person name="Takami S."/>
            <person name="Terashima Y."/>
            <person name="Suzuki O."/>
            <person name="Nakagawa S."/>
            <person name="Senoh A."/>
            <person name="Mizoguchi H."/>
            <person name="Goto Y."/>
            <person name="Shimizu F."/>
            <person name="Wakebe H."/>
            <person name="Hishigaki H."/>
            <person name="Watanabe T."/>
            <person name="Sugiyama A."/>
            <person name="Takemoto M."/>
            <person name="Kawakami B."/>
            <person name="Yamazaki M."/>
            <person name="Watanabe K."/>
            <person name="Kumagai A."/>
            <person name="Itakura S."/>
            <person name="Fukuzumi Y."/>
            <person name="Fujimori Y."/>
            <person name="Komiyama M."/>
            <person name="Tashiro H."/>
            <person name="Tanigami A."/>
            <person name="Fujiwara T."/>
            <person name="Ono T."/>
            <person name="Yamada K."/>
            <person name="Fujii Y."/>
            <person name="Ozaki K."/>
            <person name="Hirao M."/>
            <person name="Ohmori Y."/>
            <person name="Kawabata A."/>
            <person name="Hikiji T."/>
            <person name="Kobatake N."/>
            <person name="Inagaki H."/>
            <person name="Ikema Y."/>
            <person name="Okamoto S."/>
            <person name="Okitani R."/>
            <person name="Kawakami T."/>
            <person name="Noguchi S."/>
            <person name="Itoh T."/>
            <person name="Shigeta K."/>
            <person name="Senba T."/>
            <person name="Matsumura K."/>
            <person name="Nakajima Y."/>
            <person name="Mizuno T."/>
            <person name="Morinaga M."/>
            <person name="Sasaki M."/>
            <person name="Togashi T."/>
            <person name="Oyama M."/>
            <person name="Hata H."/>
            <person name="Watanabe M."/>
            <person name="Komatsu T."/>
            <person name="Mizushima-Sugano J."/>
            <person name="Satoh T."/>
            <person name="Shirai Y."/>
            <person name="Takahashi Y."/>
            <person name="Nakagawa K."/>
            <person name="Okumura K."/>
            <person name="Nagase T."/>
            <person name="Nomura N."/>
            <person name="Kikuchi H."/>
            <person name="Masuho Y."/>
            <person name="Yamashita R."/>
            <person name="Nakai K."/>
            <person name="Yada T."/>
            <person name="Nakamura Y."/>
            <person name="Ohara O."/>
            <person name="Isogai T."/>
            <person name="Sugano S."/>
        </authorList>
    </citation>
    <scope>NUCLEOTIDE SEQUENCE [LARGE SCALE MRNA] (ISOFORM 2)</scope>
</reference>
<reference key="2">
    <citation type="journal article" date="2006" name="Nature">
        <title>The DNA sequence and biological annotation of human chromosome 1.</title>
        <authorList>
            <person name="Gregory S.G."/>
            <person name="Barlow K.F."/>
            <person name="McLay K.E."/>
            <person name="Kaul R."/>
            <person name="Swarbreck D."/>
            <person name="Dunham A."/>
            <person name="Scott C.E."/>
            <person name="Howe K.L."/>
            <person name="Woodfine K."/>
            <person name="Spencer C.C.A."/>
            <person name="Jones M.C."/>
            <person name="Gillson C."/>
            <person name="Searle S."/>
            <person name="Zhou Y."/>
            <person name="Kokocinski F."/>
            <person name="McDonald L."/>
            <person name="Evans R."/>
            <person name="Phillips K."/>
            <person name="Atkinson A."/>
            <person name="Cooper R."/>
            <person name="Jones C."/>
            <person name="Hall R.E."/>
            <person name="Andrews T.D."/>
            <person name="Lloyd C."/>
            <person name="Ainscough R."/>
            <person name="Almeida J.P."/>
            <person name="Ambrose K.D."/>
            <person name="Anderson F."/>
            <person name="Andrew R.W."/>
            <person name="Ashwell R.I.S."/>
            <person name="Aubin K."/>
            <person name="Babbage A.K."/>
            <person name="Bagguley C.L."/>
            <person name="Bailey J."/>
            <person name="Beasley H."/>
            <person name="Bethel G."/>
            <person name="Bird C.P."/>
            <person name="Bray-Allen S."/>
            <person name="Brown J.Y."/>
            <person name="Brown A.J."/>
            <person name="Buckley D."/>
            <person name="Burton J."/>
            <person name="Bye J."/>
            <person name="Carder C."/>
            <person name="Chapman J.C."/>
            <person name="Clark S.Y."/>
            <person name="Clarke G."/>
            <person name="Clee C."/>
            <person name="Cobley V."/>
            <person name="Collier R.E."/>
            <person name="Corby N."/>
            <person name="Coville G.J."/>
            <person name="Davies J."/>
            <person name="Deadman R."/>
            <person name="Dunn M."/>
            <person name="Earthrowl M."/>
            <person name="Ellington A.G."/>
            <person name="Errington H."/>
            <person name="Frankish A."/>
            <person name="Frankland J."/>
            <person name="French L."/>
            <person name="Garner P."/>
            <person name="Garnett J."/>
            <person name="Gay L."/>
            <person name="Ghori M.R.J."/>
            <person name="Gibson R."/>
            <person name="Gilby L.M."/>
            <person name="Gillett W."/>
            <person name="Glithero R.J."/>
            <person name="Grafham D.V."/>
            <person name="Griffiths C."/>
            <person name="Griffiths-Jones S."/>
            <person name="Grocock R."/>
            <person name="Hammond S."/>
            <person name="Harrison E.S.I."/>
            <person name="Hart E."/>
            <person name="Haugen E."/>
            <person name="Heath P.D."/>
            <person name="Holmes S."/>
            <person name="Holt K."/>
            <person name="Howden P.J."/>
            <person name="Hunt A.R."/>
            <person name="Hunt S.E."/>
            <person name="Hunter G."/>
            <person name="Isherwood J."/>
            <person name="James R."/>
            <person name="Johnson C."/>
            <person name="Johnson D."/>
            <person name="Joy A."/>
            <person name="Kay M."/>
            <person name="Kershaw J.K."/>
            <person name="Kibukawa M."/>
            <person name="Kimberley A.M."/>
            <person name="King A."/>
            <person name="Knights A.J."/>
            <person name="Lad H."/>
            <person name="Laird G."/>
            <person name="Lawlor S."/>
            <person name="Leongamornlert D.A."/>
            <person name="Lloyd D.M."/>
            <person name="Loveland J."/>
            <person name="Lovell J."/>
            <person name="Lush M.J."/>
            <person name="Lyne R."/>
            <person name="Martin S."/>
            <person name="Mashreghi-Mohammadi M."/>
            <person name="Matthews L."/>
            <person name="Matthews N.S.W."/>
            <person name="McLaren S."/>
            <person name="Milne S."/>
            <person name="Mistry S."/>
            <person name="Moore M.J.F."/>
            <person name="Nickerson T."/>
            <person name="O'Dell C.N."/>
            <person name="Oliver K."/>
            <person name="Palmeiri A."/>
            <person name="Palmer S.A."/>
            <person name="Parker A."/>
            <person name="Patel D."/>
            <person name="Pearce A.V."/>
            <person name="Peck A.I."/>
            <person name="Pelan S."/>
            <person name="Phelps K."/>
            <person name="Phillimore B.J."/>
            <person name="Plumb R."/>
            <person name="Rajan J."/>
            <person name="Raymond C."/>
            <person name="Rouse G."/>
            <person name="Saenphimmachak C."/>
            <person name="Sehra H.K."/>
            <person name="Sheridan E."/>
            <person name="Shownkeen R."/>
            <person name="Sims S."/>
            <person name="Skuce C.D."/>
            <person name="Smith M."/>
            <person name="Steward C."/>
            <person name="Subramanian S."/>
            <person name="Sycamore N."/>
            <person name="Tracey A."/>
            <person name="Tromans A."/>
            <person name="Van Helmond Z."/>
            <person name="Wall M."/>
            <person name="Wallis J.M."/>
            <person name="White S."/>
            <person name="Whitehead S.L."/>
            <person name="Wilkinson J.E."/>
            <person name="Willey D.L."/>
            <person name="Williams H."/>
            <person name="Wilming L."/>
            <person name="Wray P.W."/>
            <person name="Wu Z."/>
            <person name="Coulson A."/>
            <person name="Vaudin M."/>
            <person name="Sulston J.E."/>
            <person name="Durbin R.M."/>
            <person name="Hubbard T."/>
            <person name="Wooster R."/>
            <person name="Dunham I."/>
            <person name="Carter N.P."/>
            <person name="McVean G."/>
            <person name="Ross M.T."/>
            <person name="Harrow J."/>
            <person name="Olson M.V."/>
            <person name="Beck S."/>
            <person name="Rogers J."/>
            <person name="Bentley D.R."/>
        </authorList>
    </citation>
    <scope>NUCLEOTIDE SEQUENCE [LARGE SCALE GENOMIC DNA]</scope>
</reference>
<reference key="3">
    <citation type="submission" date="2005-09" db="EMBL/GenBank/DDBJ databases">
        <authorList>
            <person name="Mural R.J."/>
            <person name="Istrail S."/>
            <person name="Sutton G.G."/>
            <person name="Florea L."/>
            <person name="Halpern A.L."/>
            <person name="Mobarry C.M."/>
            <person name="Lippert R."/>
            <person name="Walenz B."/>
            <person name="Shatkay H."/>
            <person name="Dew I."/>
            <person name="Miller J.R."/>
            <person name="Flanigan M.J."/>
            <person name="Edwards N.J."/>
            <person name="Bolanos R."/>
            <person name="Fasulo D."/>
            <person name="Halldorsson B.V."/>
            <person name="Hannenhalli S."/>
            <person name="Turner R."/>
            <person name="Yooseph S."/>
            <person name="Lu F."/>
            <person name="Nusskern D.R."/>
            <person name="Shue B.C."/>
            <person name="Zheng X.H."/>
            <person name="Zhong F."/>
            <person name="Delcher A.L."/>
            <person name="Huson D.H."/>
            <person name="Kravitz S.A."/>
            <person name="Mouchard L."/>
            <person name="Reinert K."/>
            <person name="Remington K.A."/>
            <person name="Clark A.G."/>
            <person name="Waterman M.S."/>
            <person name="Eichler E.E."/>
            <person name="Adams M.D."/>
            <person name="Hunkapiller M.W."/>
            <person name="Myers E.W."/>
            <person name="Venter J.C."/>
        </authorList>
    </citation>
    <scope>NUCLEOTIDE SEQUENCE [LARGE SCALE GENOMIC DNA]</scope>
</reference>
<reference key="4">
    <citation type="journal article" date="2004" name="Genome Res.">
        <title>The status, quality, and expansion of the NIH full-length cDNA project: the Mammalian Gene Collection (MGC).</title>
        <authorList>
            <consortium name="The MGC Project Team"/>
        </authorList>
    </citation>
    <scope>NUCLEOTIDE SEQUENCE [LARGE SCALE MRNA] (ISOFORM 4)</scope>
    <source>
        <tissue>Lymph</tissue>
    </source>
</reference>
<reference key="5">
    <citation type="journal article" date="1999" name="DNA Res.">
        <title>Prediction of the coding sequences of unidentified human genes. XIV. The complete sequences of 100 new cDNA clones from brain which code for large proteins in vitro.</title>
        <authorList>
            <person name="Kikuno R."/>
            <person name="Nagase T."/>
            <person name="Ishikawa K."/>
            <person name="Hirosawa M."/>
            <person name="Miyajima N."/>
            <person name="Tanaka A."/>
            <person name="Kotani H."/>
            <person name="Nomura N."/>
            <person name="Ohara O."/>
        </authorList>
    </citation>
    <scope>NUCLEOTIDE SEQUENCE [LARGE SCALE MRNA] OF 110-677 (ISOFORM 3)</scope>
    <source>
        <tissue>Brain</tissue>
    </source>
</reference>
<reference key="6">
    <citation type="journal article" date="2006" name="Nature">
        <title>Molecular architecture and assembly of the DDB1-CUL4A ubiquitin ligase machinery.</title>
        <authorList>
            <person name="Angers S."/>
            <person name="Li T."/>
            <person name="Yi X."/>
            <person name="MacCoss M.J."/>
            <person name="Moon R.T."/>
            <person name="Zheng N."/>
        </authorList>
    </citation>
    <scope>FUNCTION</scope>
</reference>
<reference key="7">
    <citation type="journal article" date="2009" name="Sci. Signal.">
        <title>Quantitative phosphoproteomic analysis of T cell receptor signaling reveals system-wide modulation of protein-protein interactions.</title>
        <authorList>
            <person name="Mayya V."/>
            <person name="Lundgren D.H."/>
            <person name="Hwang S.-I."/>
            <person name="Rezaul K."/>
            <person name="Wu L."/>
            <person name="Eng J.K."/>
            <person name="Rodionov V."/>
            <person name="Han D.K."/>
        </authorList>
    </citation>
    <scope>PHOSPHORYLATION [LARGE SCALE ANALYSIS] AT SER-511</scope>
    <scope>IDENTIFICATION BY MASS SPECTROMETRY [LARGE SCALE ANALYSIS]</scope>
    <source>
        <tissue>Leukemic T-cell</tissue>
    </source>
</reference>
<reference key="8">
    <citation type="journal article" date="2010" name="Sci. Signal.">
        <title>Quantitative phosphoproteomics reveals widespread full phosphorylation site occupancy during mitosis.</title>
        <authorList>
            <person name="Olsen J.V."/>
            <person name="Vermeulen M."/>
            <person name="Santamaria A."/>
            <person name="Kumar C."/>
            <person name="Miller M.L."/>
            <person name="Jensen L.J."/>
            <person name="Gnad F."/>
            <person name="Cox J."/>
            <person name="Jensen T.S."/>
            <person name="Nigg E.A."/>
            <person name="Brunak S."/>
            <person name="Mann M."/>
        </authorList>
    </citation>
    <scope>PHOSPHORYLATION [LARGE SCALE ANALYSIS] AT SER-511</scope>
    <scope>IDENTIFICATION BY MASS SPECTROMETRY [LARGE SCALE ANALYSIS]</scope>
    <source>
        <tissue>Cervix carcinoma</tissue>
    </source>
</reference>
<reference key="9">
    <citation type="journal article" date="2013" name="J. Proteome Res.">
        <title>Toward a comprehensive characterization of a human cancer cell phosphoproteome.</title>
        <authorList>
            <person name="Zhou H."/>
            <person name="Di Palma S."/>
            <person name="Preisinger C."/>
            <person name="Peng M."/>
            <person name="Polat A.N."/>
            <person name="Heck A.J."/>
            <person name="Mohammed S."/>
        </authorList>
    </citation>
    <scope>PHOSPHORYLATION [LARGE SCALE ANALYSIS] AT SER-353 AND SER-511</scope>
    <scope>IDENTIFICATION BY MASS SPECTROMETRY [LARGE SCALE ANALYSIS]</scope>
    <source>
        <tissue>Cervix carcinoma</tissue>
        <tissue>Erythroleukemia</tissue>
    </source>
</reference>
<gene>
    <name type="primary">WDTC1</name>
    <name type="synonym">KIAA1037</name>
</gene>
<keyword id="KW-0002">3D-structure</keyword>
<keyword id="KW-0025">Alternative splicing</keyword>
<keyword id="KW-0597">Phosphoprotein</keyword>
<keyword id="KW-1267">Proteomics identification</keyword>
<keyword id="KW-1185">Reference proteome</keyword>
<keyword id="KW-0677">Repeat</keyword>
<keyword id="KW-0802">TPR repeat</keyword>
<keyword id="KW-0833">Ubl conjugation pathway</keyword>
<keyword id="KW-0853">WD repeat</keyword>
<proteinExistence type="evidence at protein level"/>
<dbReference type="EMBL" id="AK001734">
    <property type="protein sequence ID" value="BAA91868.1"/>
    <property type="molecule type" value="mRNA"/>
</dbReference>
<dbReference type="EMBL" id="AL590640">
    <property type="status" value="NOT_ANNOTATED_CDS"/>
    <property type="molecule type" value="Genomic_DNA"/>
</dbReference>
<dbReference type="EMBL" id="FO393419">
    <property type="status" value="NOT_ANNOTATED_CDS"/>
    <property type="molecule type" value="Genomic_DNA"/>
</dbReference>
<dbReference type="EMBL" id="CH471059">
    <property type="protein sequence ID" value="EAX07770.1"/>
    <property type="molecule type" value="Genomic_DNA"/>
</dbReference>
<dbReference type="EMBL" id="CH471059">
    <property type="protein sequence ID" value="EAX07771.1"/>
    <property type="molecule type" value="Genomic_DNA"/>
</dbReference>
<dbReference type="EMBL" id="BC032523">
    <property type="protein sequence ID" value="AAH32523.1"/>
    <property type="molecule type" value="mRNA"/>
</dbReference>
<dbReference type="EMBL" id="AB028960">
    <property type="protein sequence ID" value="BAA82989.1"/>
    <property type="molecule type" value="mRNA"/>
</dbReference>
<dbReference type="CCDS" id="CCDS296.1">
    <molecule id="Q8N5D0-4"/>
</dbReference>
<dbReference type="CCDS" id="CCDS60044.1">
    <molecule id="Q8N5D0-1"/>
</dbReference>
<dbReference type="CCDS" id="CCDS90895.1">
    <molecule id="Q8N5D0-2"/>
</dbReference>
<dbReference type="RefSeq" id="NP_001263181.1">
    <molecule id="Q8N5D0-1"/>
    <property type="nucleotide sequence ID" value="NM_001276252.2"/>
</dbReference>
<dbReference type="RefSeq" id="NP_001397696.1">
    <molecule id="Q8N5D0-2"/>
    <property type="nucleotide sequence ID" value="NM_001410767.1"/>
</dbReference>
<dbReference type="RefSeq" id="NP_055838.2">
    <molecule id="Q8N5D0-4"/>
    <property type="nucleotide sequence ID" value="NM_015023.4"/>
</dbReference>
<dbReference type="RefSeq" id="XP_011539359.1">
    <molecule id="Q8N5D0-1"/>
    <property type="nucleotide sequence ID" value="XM_011541057.2"/>
</dbReference>
<dbReference type="RefSeq" id="XP_047305705.1">
    <molecule id="Q8N5D0-1"/>
    <property type="nucleotide sequence ID" value="XM_047449749.1"/>
</dbReference>
<dbReference type="RefSeq" id="XP_047305706.1">
    <molecule id="Q8N5D0-1"/>
    <property type="nucleotide sequence ID" value="XM_047449750.1"/>
</dbReference>
<dbReference type="RefSeq" id="XP_047305716.1">
    <molecule id="Q8N5D0-4"/>
    <property type="nucleotide sequence ID" value="XM_047449760.1"/>
</dbReference>
<dbReference type="RefSeq" id="XP_047305717.1">
    <molecule id="Q8N5D0-2"/>
    <property type="nucleotide sequence ID" value="XM_047449761.1"/>
</dbReference>
<dbReference type="RefSeq" id="XP_054191237.1">
    <molecule id="Q8N5D0-1"/>
    <property type="nucleotide sequence ID" value="XM_054335262.1"/>
</dbReference>
<dbReference type="RefSeq" id="XP_054191238.1">
    <molecule id="Q8N5D0-1"/>
    <property type="nucleotide sequence ID" value="XM_054335263.1"/>
</dbReference>
<dbReference type="RefSeq" id="XP_054191239.1">
    <molecule id="Q8N5D0-1"/>
    <property type="nucleotide sequence ID" value="XM_054335264.1"/>
</dbReference>
<dbReference type="RefSeq" id="XP_054191240.1">
    <molecule id="Q8N5D0-4"/>
    <property type="nucleotide sequence ID" value="XM_054335265.1"/>
</dbReference>
<dbReference type="RefSeq" id="XP_054191241.1">
    <molecule id="Q8N5D0-2"/>
    <property type="nucleotide sequence ID" value="XM_054335266.1"/>
</dbReference>
<dbReference type="PDB" id="3I7N">
    <property type="method" value="X-ray"/>
    <property type="resolution" value="2.80 A"/>
    <property type="chains" value="B=5-17"/>
</dbReference>
<dbReference type="PDBsum" id="3I7N"/>
<dbReference type="SMR" id="Q8N5D0"/>
<dbReference type="BioGRID" id="116677">
    <property type="interactions" value="169"/>
</dbReference>
<dbReference type="ComplexPortal" id="CPX-2787">
    <property type="entry name" value="CRL4-DCAF9 E3 ubiquitin ligase complex, CUL4A variant"/>
</dbReference>
<dbReference type="ComplexPortal" id="CPX-2809">
    <property type="entry name" value="CRL4-DCAF9 E3 ubiquitin ligase complex, CUL4B variant"/>
</dbReference>
<dbReference type="CORUM" id="Q8N5D0"/>
<dbReference type="DIP" id="DIP-31627N"/>
<dbReference type="FunCoup" id="Q8N5D0">
    <property type="interactions" value="2468"/>
</dbReference>
<dbReference type="IntAct" id="Q8N5D0">
    <property type="interactions" value="60"/>
</dbReference>
<dbReference type="STRING" id="9606.ENSP00000317971"/>
<dbReference type="GlyGen" id="Q8N5D0">
    <property type="glycosylation" value="1 site"/>
</dbReference>
<dbReference type="iPTMnet" id="Q8N5D0"/>
<dbReference type="MetOSite" id="Q8N5D0"/>
<dbReference type="PhosphoSitePlus" id="Q8N5D0"/>
<dbReference type="BioMuta" id="WDTC1"/>
<dbReference type="DMDM" id="41018470"/>
<dbReference type="jPOST" id="Q8N5D0"/>
<dbReference type="MassIVE" id="Q8N5D0"/>
<dbReference type="PaxDb" id="9606-ENSP00000317971"/>
<dbReference type="PeptideAtlas" id="Q8N5D0"/>
<dbReference type="ProteomicsDB" id="72037">
    <molecule id="Q8N5D0-1"/>
</dbReference>
<dbReference type="ProteomicsDB" id="72038">
    <molecule id="Q8N5D0-2"/>
</dbReference>
<dbReference type="ProteomicsDB" id="72039">
    <molecule id="Q8N5D0-3"/>
</dbReference>
<dbReference type="ProteomicsDB" id="72040">
    <molecule id="Q8N5D0-4"/>
</dbReference>
<dbReference type="ProteomicsDB" id="72041">
    <molecule id="Q8N5D0-5"/>
</dbReference>
<dbReference type="ProteomicsDB" id="72042">
    <molecule id="Q8N5D0-6"/>
</dbReference>
<dbReference type="Pumba" id="Q8N5D0"/>
<dbReference type="Antibodypedia" id="30730">
    <property type="antibodies" value="126 antibodies from 20 providers"/>
</dbReference>
<dbReference type="DNASU" id="23038"/>
<dbReference type="Ensembl" id="ENST00000319394.8">
    <molecule id="Q8N5D0-1"/>
    <property type="protein sequence ID" value="ENSP00000317971.3"/>
    <property type="gene ID" value="ENSG00000142784.16"/>
</dbReference>
<dbReference type="Ensembl" id="ENST00000361771.7">
    <molecule id="Q8N5D0-4"/>
    <property type="protein sequence ID" value="ENSP00000355317.3"/>
    <property type="gene ID" value="ENSG00000142784.16"/>
</dbReference>
<dbReference type="Ensembl" id="ENST00000447062.2">
    <molecule id="Q8N5D0-2"/>
    <property type="protein sequence ID" value="ENSP00000434578.1"/>
    <property type="gene ID" value="ENSG00000142784.16"/>
</dbReference>
<dbReference type="GeneID" id="23038"/>
<dbReference type="KEGG" id="hsa:23038"/>
<dbReference type="MANE-Select" id="ENST00000319394.8">
    <property type="protein sequence ID" value="ENSP00000317971.3"/>
    <property type="RefSeq nucleotide sequence ID" value="NM_001276252.2"/>
    <property type="RefSeq protein sequence ID" value="NP_001263181.1"/>
</dbReference>
<dbReference type="UCSC" id="uc001bno.5">
    <molecule id="Q8N5D0-1"/>
    <property type="organism name" value="human"/>
</dbReference>
<dbReference type="AGR" id="HGNC:29175"/>
<dbReference type="CTD" id="23038"/>
<dbReference type="DisGeNET" id="23038"/>
<dbReference type="GeneCards" id="WDTC1"/>
<dbReference type="HGNC" id="HGNC:29175">
    <property type="gene designation" value="WDTC1"/>
</dbReference>
<dbReference type="HPA" id="ENSG00000142784">
    <property type="expression patterns" value="Low tissue specificity"/>
</dbReference>
<dbReference type="MIM" id="619763">
    <property type="type" value="gene"/>
</dbReference>
<dbReference type="neXtProt" id="NX_Q8N5D0"/>
<dbReference type="OpenTargets" id="ENSG00000142784"/>
<dbReference type="PharmGKB" id="PA134981539"/>
<dbReference type="VEuPathDB" id="HostDB:ENSG00000142784"/>
<dbReference type="eggNOG" id="KOG1310">
    <property type="taxonomic scope" value="Eukaryota"/>
</dbReference>
<dbReference type="eggNOG" id="KOG1334">
    <property type="taxonomic scope" value="Eukaryota"/>
</dbReference>
<dbReference type="GeneTree" id="ENSGT00950000182900"/>
<dbReference type="HOGENOM" id="CLU_012381_3_1_1"/>
<dbReference type="InParanoid" id="Q8N5D0"/>
<dbReference type="OMA" id="YKQRYVG"/>
<dbReference type="OrthoDB" id="4869960at2759"/>
<dbReference type="PAN-GO" id="Q8N5D0">
    <property type="GO annotations" value="3 GO annotations based on evolutionary models"/>
</dbReference>
<dbReference type="PhylomeDB" id="Q8N5D0"/>
<dbReference type="TreeFam" id="TF320710"/>
<dbReference type="PathwayCommons" id="Q8N5D0"/>
<dbReference type="Reactome" id="R-HSA-8951664">
    <property type="pathway name" value="Neddylation"/>
</dbReference>
<dbReference type="SignaLink" id="Q8N5D0"/>
<dbReference type="UniPathway" id="UPA00143"/>
<dbReference type="BioGRID-ORCS" id="23038">
    <property type="hits" value="60 hits in 1202 CRISPR screens"/>
</dbReference>
<dbReference type="ChiTaRS" id="WDTC1">
    <property type="organism name" value="human"/>
</dbReference>
<dbReference type="EvolutionaryTrace" id="Q8N5D0"/>
<dbReference type="GenomeRNAi" id="23038"/>
<dbReference type="Pharos" id="Q8N5D0">
    <property type="development level" value="Tbio"/>
</dbReference>
<dbReference type="PRO" id="PR:Q8N5D0"/>
<dbReference type="Proteomes" id="UP000005640">
    <property type="component" value="Chromosome 1"/>
</dbReference>
<dbReference type="RNAct" id="Q8N5D0">
    <property type="molecule type" value="protein"/>
</dbReference>
<dbReference type="Bgee" id="ENSG00000142784">
    <property type="expression patterns" value="Expressed in hindlimb stylopod muscle and 198 other cell types or tissues"/>
</dbReference>
<dbReference type="ExpressionAtlas" id="Q8N5D0">
    <property type="expression patterns" value="baseline and differential"/>
</dbReference>
<dbReference type="GO" id="GO:0080008">
    <property type="term" value="C:Cul4-RING E3 ubiquitin ligase complex"/>
    <property type="evidence" value="ECO:0000318"/>
    <property type="project" value="GO_Central"/>
</dbReference>
<dbReference type="GO" id="GO:0005737">
    <property type="term" value="C:cytoplasm"/>
    <property type="evidence" value="ECO:0000318"/>
    <property type="project" value="GO_Central"/>
</dbReference>
<dbReference type="GO" id="GO:0005829">
    <property type="term" value="C:cytosol"/>
    <property type="evidence" value="ECO:0007669"/>
    <property type="project" value="Ensembl"/>
</dbReference>
<dbReference type="GO" id="GO:0005654">
    <property type="term" value="C:nucleoplasm"/>
    <property type="evidence" value="ECO:0000304"/>
    <property type="project" value="Reactome"/>
</dbReference>
<dbReference type="GO" id="GO:0004857">
    <property type="term" value="F:enzyme inhibitor activity"/>
    <property type="evidence" value="ECO:0007669"/>
    <property type="project" value="Ensembl"/>
</dbReference>
<dbReference type="GO" id="GO:0042393">
    <property type="term" value="F:histone binding"/>
    <property type="evidence" value="ECO:0007669"/>
    <property type="project" value="Ensembl"/>
</dbReference>
<dbReference type="GO" id="GO:0042826">
    <property type="term" value="F:histone deacetylase binding"/>
    <property type="evidence" value="ECO:0007669"/>
    <property type="project" value="Ensembl"/>
</dbReference>
<dbReference type="GO" id="GO:0032869">
    <property type="term" value="P:cellular response to insulin stimulus"/>
    <property type="evidence" value="ECO:0007669"/>
    <property type="project" value="Ensembl"/>
</dbReference>
<dbReference type="GO" id="GO:0006006">
    <property type="term" value="P:glucose metabolic process"/>
    <property type="evidence" value="ECO:0007669"/>
    <property type="project" value="Ensembl"/>
</dbReference>
<dbReference type="GO" id="GO:0001701">
    <property type="term" value="P:in utero embryonic development"/>
    <property type="evidence" value="ECO:0007669"/>
    <property type="project" value="Ensembl"/>
</dbReference>
<dbReference type="GO" id="GO:0055082">
    <property type="term" value="P:intracellular chemical homeostasis"/>
    <property type="evidence" value="ECO:0007669"/>
    <property type="project" value="Ensembl"/>
</dbReference>
<dbReference type="GO" id="GO:0035264">
    <property type="term" value="P:multicellular organism growth"/>
    <property type="evidence" value="ECO:0007669"/>
    <property type="project" value="Ensembl"/>
</dbReference>
<dbReference type="GO" id="GO:0045717">
    <property type="term" value="P:negative regulation of fatty acid biosynthetic process"/>
    <property type="evidence" value="ECO:0000318"/>
    <property type="project" value="GO_Central"/>
</dbReference>
<dbReference type="GO" id="GO:0000122">
    <property type="term" value="P:negative regulation of transcription by RNA polymerase II"/>
    <property type="evidence" value="ECO:0007669"/>
    <property type="project" value="Ensembl"/>
</dbReference>
<dbReference type="GO" id="GO:0016567">
    <property type="term" value="P:protein ubiquitination"/>
    <property type="evidence" value="ECO:0007669"/>
    <property type="project" value="UniProtKB-UniPathway"/>
</dbReference>
<dbReference type="GO" id="GO:0008361">
    <property type="term" value="P:regulation of cell size"/>
    <property type="evidence" value="ECO:0007669"/>
    <property type="project" value="Ensembl"/>
</dbReference>
<dbReference type="FunFam" id="1.25.40.10:FF:000079">
    <property type="entry name" value="WD and tetratricopeptide repeats protein 1"/>
    <property type="match status" value="1"/>
</dbReference>
<dbReference type="FunFam" id="2.130.10.10:FF:000201">
    <property type="entry name" value="WD and tetratricopeptide repeats protein 1"/>
    <property type="match status" value="1"/>
</dbReference>
<dbReference type="Gene3D" id="1.25.40.10">
    <property type="entry name" value="Tetratricopeptide repeat domain"/>
    <property type="match status" value="1"/>
</dbReference>
<dbReference type="Gene3D" id="2.130.10.10">
    <property type="entry name" value="YVTN repeat-like/Quinoprotein amine dehydrogenase"/>
    <property type="match status" value="2"/>
</dbReference>
<dbReference type="InterPro" id="IPR045151">
    <property type="entry name" value="DCAF8"/>
</dbReference>
<dbReference type="InterPro" id="IPR011990">
    <property type="entry name" value="TPR-like_helical_dom_sf"/>
</dbReference>
<dbReference type="InterPro" id="IPR019734">
    <property type="entry name" value="TPR_rpt"/>
</dbReference>
<dbReference type="InterPro" id="IPR015943">
    <property type="entry name" value="WD40/YVTN_repeat-like_dom_sf"/>
</dbReference>
<dbReference type="InterPro" id="IPR036322">
    <property type="entry name" value="WD40_repeat_dom_sf"/>
</dbReference>
<dbReference type="InterPro" id="IPR001680">
    <property type="entry name" value="WD40_rpt"/>
</dbReference>
<dbReference type="PANTHER" id="PTHR15574:SF40">
    <property type="entry name" value="WD AND TETRATRICOPEPTIDE REPEATS PROTEIN 1"/>
    <property type="match status" value="1"/>
</dbReference>
<dbReference type="PANTHER" id="PTHR15574">
    <property type="entry name" value="WD REPEAT DOMAIN-CONTAINING FAMILY"/>
    <property type="match status" value="1"/>
</dbReference>
<dbReference type="Pfam" id="PF00400">
    <property type="entry name" value="WD40"/>
    <property type="match status" value="4"/>
</dbReference>
<dbReference type="SMART" id="SM00028">
    <property type="entry name" value="TPR"/>
    <property type="match status" value="3"/>
</dbReference>
<dbReference type="SMART" id="SM00320">
    <property type="entry name" value="WD40"/>
    <property type="match status" value="6"/>
</dbReference>
<dbReference type="SUPFAM" id="SSF48452">
    <property type="entry name" value="TPR-like"/>
    <property type="match status" value="1"/>
</dbReference>
<dbReference type="SUPFAM" id="SSF50978">
    <property type="entry name" value="WD40 repeat-like"/>
    <property type="match status" value="1"/>
</dbReference>
<dbReference type="PROSITE" id="PS50293">
    <property type="entry name" value="TPR_REGION"/>
    <property type="match status" value="1"/>
</dbReference>
<dbReference type="PROSITE" id="PS50082">
    <property type="entry name" value="WD_REPEATS_2"/>
    <property type="match status" value="4"/>
</dbReference>
<dbReference type="PROSITE" id="PS50294">
    <property type="entry name" value="WD_REPEATS_REGION"/>
    <property type="match status" value="2"/>
</dbReference>
<protein>
    <recommendedName>
        <fullName>WD and tetratricopeptide repeats protein 1</fullName>
    </recommendedName>
</protein>